<sequence length="449" mass="47414">METPAMFIKRCSRSIFLQVVIGLVIGVICGVGIPDLAVQMKPLGDGFIKLIKMLIALIVFCVVVNGISGAGDLKKVGRIGLKSVIYFEILTTIALVLGLVVAYSLGLGSGANIHLNELPAGDVALYTGRTQEIHGPVAFLMGLIPTSVFSAFAENDILQVLLFSVLFGSALNLVGEQASGVARLINEFSHIVFRIMGMIVRLAPLGVFGAVAFTTARYGVDSLSHLGALVLVFYATCLVFVMAVLGSVLRLSGVRMLPFLRYFREELMIVMGTASSDAVLPQVMRKLEHMGIRSSTVGLVIPTGYSFNLDGFSIYLTLAVVFIAHVTGTPLAMTDLVTILLVSLVTSKGAHGIPGSALVILAATLTAVPAIPVAGLVLVLSVDWFMGIGRALTNLIGNCVATVTIARWENDIDMPRAQAILDGRLEAPAKADGEPLKRSAVAGEGKLHG</sequence>
<dbReference type="EMBL" id="CP000438">
    <property type="protein sequence ID" value="ABJ15076.1"/>
    <property type="molecule type" value="Genomic_DNA"/>
</dbReference>
<dbReference type="RefSeq" id="WP_003137006.1">
    <property type="nucleotide sequence ID" value="NZ_CP034244.1"/>
</dbReference>
<dbReference type="SMR" id="Q02UV9"/>
<dbReference type="KEGG" id="pau:PA14_01460"/>
<dbReference type="PseudoCAP" id="PA14_01460"/>
<dbReference type="HOGENOM" id="CLU_019375_7_0_6"/>
<dbReference type="BioCyc" id="PAER208963:G1G74-124-MONOMER"/>
<dbReference type="Proteomes" id="UP000000653">
    <property type="component" value="Chromosome"/>
</dbReference>
<dbReference type="GO" id="GO:0005886">
    <property type="term" value="C:plasma membrane"/>
    <property type="evidence" value="ECO:0007669"/>
    <property type="project" value="UniProtKB-SubCell"/>
</dbReference>
<dbReference type="GO" id="GO:0015138">
    <property type="term" value="F:fumarate transmembrane transporter activity"/>
    <property type="evidence" value="ECO:0007669"/>
    <property type="project" value="TreeGrafter"/>
</dbReference>
<dbReference type="GO" id="GO:0015366">
    <property type="term" value="F:malate:proton symporter activity"/>
    <property type="evidence" value="ECO:0007669"/>
    <property type="project" value="TreeGrafter"/>
</dbReference>
<dbReference type="GO" id="GO:0015141">
    <property type="term" value="F:succinate transmembrane transporter activity"/>
    <property type="evidence" value="ECO:0007669"/>
    <property type="project" value="TreeGrafter"/>
</dbReference>
<dbReference type="GO" id="GO:0070778">
    <property type="term" value="P:L-aspartate transmembrane transport"/>
    <property type="evidence" value="ECO:0007669"/>
    <property type="project" value="TreeGrafter"/>
</dbReference>
<dbReference type="FunFam" id="1.10.3860.10:FF:000001">
    <property type="entry name" value="C4-dicarboxylate transport protein"/>
    <property type="match status" value="1"/>
</dbReference>
<dbReference type="Gene3D" id="1.10.3860.10">
    <property type="entry name" value="Sodium:dicarboxylate symporter"/>
    <property type="match status" value="1"/>
</dbReference>
<dbReference type="HAMAP" id="MF_01300">
    <property type="entry name" value="C4_dicarb_transport"/>
    <property type="match status" value="1"/>
</dbReference>
<dbReference type="InterPro" id="IPR023954">
    <property type="entry name" value="C4_dicarb_transport"/>
</dbReference>
<dbReference type="InterPro" id="IPR001991">
    <property type="entry name" value="Na-dicarboxylate_symporter"/>
</dbReference>
<dbReference type="InterPro" id="IPR018107">
    <property type="entry name" value="Na-dicarboxylate_symporter_CS"/>
</dbReference>
<dbReference type="InterPro" id="IPR036458">
    <property type="entry name" value="Na:dicarbo_symporter_sf"/>
</dbReference>
<dbReference type="NCBIfam" id="NF002461">
    <property type="entry name" value="PRK01663.1"/>
    <property type="match status" value="1"/>
</dbReference>
<dbReference type="NCBIfam" id="NF009587">
    <property type="entry name" value="PRK13027.1"/>
    <property type="match status" value="1"/>
</dbReference>
<dbReference type="PANTHER" id="PTHR42865:SF1">
    <property type="entry name" value="AEROBIC C4-DICARBOXYLATE TRANSPORT PROTEIN"/>
    <property type="match status" value="1"/>
</dbReference>
<dbReference type="PANTHER" id="PTHR42865">
    <property type="entry name" value="PROTON/GLUTAMATE-ASPARTATE SYMPORTER"/>
    <property type="match status" value="1"/>
</dbReference>
<dbReference type="Pfam" id="PF00375">
    <property type="entry name" value="SDF"/>
    <property type="match status" value="1"/>
</dbReference>
<dbReference type="PRINTS" id="PR00173">
    <property type="entry name" value="EDTRNSPORT"/>
</dbReference>
<dbReference type="SUPFAM" id="SSF118215">
    <property type="entry name" value="Proton glutamate symport protein"/>
    <property type="match status" value="1"/>
</dbReference>
<dbReference type="PROSITE" id="PS00714">
    <property type="entry name" value="NA_DICARBOXYL_SYMP_2"/>
    <property type="match status" value="1"/>
</dbReference>
<protein>
    <recommendedName>
        <fullName evidence="1">C4-dicarboxylate transport protein 1</fullName>
    </recommendedName>
</protein>
<reference key="1">
    <citation type="journal article" date="2006" name="Genome Biol.">
        <title>Genomic analysis reveals that Pseudomonas aeruginosa virulence is combinatorial.</title>
        <authorList>
            <person name="Lee D.G."/>
            <person name="Urbach J.M."/>
            <person name="Wu G."/>
            <person name="Liberati N.T."/>
            <person name="Feinbaum R.L."/>
            <person name="Miyata S."/>
            <person name="Diggins L.T."/>
            <person name="He J."/>
            <person name="Saucier M."/>
            <person name="Deziel E."/>
            <person name="Friedman L."/>
            <person name="Li L."/>
            <person name="Grills G."/>
            <person name="Montgomery K."/>
            <person name="Kucherlapati R."/>
            <person name="Rahme L.G."/>
            <person name="Ausubel F.M."/>
        </authorList>
    </citation>
    <scope>NUCLEOTIDE SEQUENCE [LARGE SCALE GENOMIC DNA]</scope>
    <source>
        <strain>UCBPP-PA14</strain>
    </source>
</reference>
<feature type="chain" id="PRO_0000321992" description="C4-dicarboxylate transport protein 1">
    <location>
        <begin position="1"/>
        <end position="449"/>
    </location>
</feature>
<feature type="transmembrane region" description="Helical" evidence="1">
    <location>
        <begin position="14"/>
        <end position="34"/>
    </location>
</feature>
<feature type="transmembrane region" description="Helical" evidence="1">
    <location>
        <begin position="47"/>
        <end position="67"/>
    </location>
</feature>
<feature type="transmembrane region" description="Helical" evidence="1">
    <location>
        <begin position="83"/>
        <end position="103"/>
    </location>
</feature>
<feature type="transmembrane region" description="Helical" evidence="1">
    <location>
        <begin position="157"/>
        <end position="177"/>
    </location>
</feature>
<feature type="transmembrane region" description="Helical" evidence="1">
    <location>
        <begin position="195"/>
        <end position="215"/>
    </location>
</feature>
<feature type="transmembrane region" description="Helical" evidence="1">
    <location>
        <begin position="226"/>
        <end position="246"/>
    </location>
</feature>
<feature type="transmembrane region" description="Helical" evidence="1">
    <location>
        <begin position="312"/>
        <end position="332"/>
    </location>
</feature>
<feature type="transmembrane region" description="Helical" evidence="1">
    <location>
        <begin position="359"/>
        <end position="379"/>
    </location>
</feature>
<feature type="transmembrane region" description="Helical" evidence="1">
    <location>
        <begin position="385"/>
        <end position="405"/>
    </location>
</feature>
<evidence type="ECO:0000255" key="1">
    <source>
        <dbReference type="HAMAP-Rule" id="MF_01300"/>
    </source>
</evidence>
<comment type="function">
    <text evidence="1">Responsible for the transport of dicarboxylates such as succinate, fumarate, and malate from the periplasm across the membrane.</text>
</comment>
<comment type="subcellular location">
    <subcellularLocation>
        <location evidence="1">Cell inner membrane</location>
        <topology evidence="1">Multi-pass membrane protein</topology>
    </subcellularLocation>
</comment>
<comment type="similarity">
    <text evidence="1">Belongs to the dicarboxylate/amino acid:cation symporter (DAACS) (TC 2.A.23) family.</text>
</comment>
<organism>
    <name type="scientific">Pseudomonas aeruginosa (strain UCBPP-PA14)</name>
    <dbReference type="NCBI Taxonomy" id="208963"/>
    <lineage>
        <taxon>Bacteria</taxon>
        <taxon>Pseudomonadati</taxon>
        <taxon>Pseudomonadota</taxon>
        <taxon>Gammaproteobacteria</taxon>
        <taxon>Pseudomonadales</taxon>
        <taxon>Pseudomonadaceae</taxon>
        <taxon>Pseudomonas</taxon>
    </lineage>
</organism>
<keyword id="KW-0997">Cell inner membrane</keyword>
<keyword id="KW-1003">Cell membrane</keyword>
<keyword id="KW-0472">Membrane</keyword>
<keyword id="KW-0769">Symport</keyword>
<keyword id="KW-0812">Transmembrane</keyword>
<keyword id="KW-1133">Transmembrane helix</keyword>
<keyword id="KW-0813">Transport</keyword>
<proteinExistence type="inferred from homology"/>
<accession>Q02UV9</accession>
<name>DCTA1_PSEAB</name>
<gene>
    <name evidence="1" type="primary">dctA1</name>
    <name type="ordered locus">PA14_01460</name>
</gene>